<evidence type="ECO:0000255" key="1">
    <source>
        <dbReference type="HAMAP-Rule" id="MF_01597"/>
    </source>
</evidence>
<name>MDTI_PHOLL</name>
<feature type="chain" id="PRO_0000331143" description="Spermidine export protein MdtI">
    <location>
        <begin position="1"/>
        <end position="109"/>
    </location>
</feature>
<feature type="transmembrane region" description="Helical" evidence="1">
    <location>
        <begin position="6"/>
        <end position="26"/>
    </location>
</feature>
<feature type="transmembrane region" description="Helical" evidence="1">
    <location>
        <begin position="36"/>
        <end position="56"/>
    </location>
</feature>
<feature type="transmembrane region" description="Helical" evidence="1">
    <location>
        <begin position="63"/>
        <end position="83"/>
    </location>
</feature>
<feature type="transmembrane region" description="Helical" evidence="1">
    <location>
        <begin position="88"/>
        <end position="108"/>
    </location>
</feature>
<gene>
    <name evidence="1" type="primary">mdtI</name>
    <name type="ordered locus">plu2124</name>
</gene>
<protein>
    <recommendedName>
        <fullName evidence="1">Spermidine export protein MdtI</fullName>
    </recommendedName>
</protein>
<organism>
    <name type="scientific">Photorhabdus laumondii subsp. laumondii (strain DSM 15139 / CIP 105565 / TT01)</name>
    <name type="common">Photorhabdus luminescens subsp. laumondii</name>
    <dbReference type="NCBI Taxonomy" id="243265"/>
    <lineage>
        <taxon>Bacteria</taxon>
        <taxon>Pseudomonadati</taxon>
        <taxon>Pseudomonadota</taxon>
        <taxon>Gammaproteobacteria</taxon>
        <taxon>Enterobacterales</taxon>
        <taxon>Morganellaceae</taxon>
        <taxon>Photorhabdus</taxon>
    </lineage>
</organism>
<comment type="function">
    <text evidence="1">Catalyzes the excretion of spermidine.</text>
</comment>
<comment type="subunit">
    <text evidence="1">Forms a complex with MdtJ.</text>
</comment>
<comment type="subcellular location">
    <subcellularLocation>
        <location evidence="1">Cell inner membrane</location>
        <topology evidence="1">Multi-pass membrane protein</topology>
    </subcellularLocation>
</comment>
<comment type="similarity">
    <text evidence="1">Belongs to the drug/metabolite transporter (DMT) superfamily. Small multidrug resistance (SMR) (TC 2.A.7.1) family. MdtI subfamily.</text>
</comment>
<sequence length="109" mass="11999">MQQFEWWHAAFLFLAVVLDILANILLKLSNGFRRPWMGILSLIAVLGAFSALAQAVKGIELSIAYALWGAFGIIATVAAGWIMFNQRLNYKGWGGIALLLLGMVMIKMA</sequence>
<accession>Q7N536</accession>
<keyword id="KW-0997">Cell inner membrane</keyword>
<keyword id="KW-1003">Cell membrane</keyword>
<keyword id="KW-0472">Membrane</keyword>
<keyword id="KW-1185">Reference proteome</keyword>
<keyword id="KW-0812">Transmembrane</keyword>
<keyword id="KW-1133">Transmembrane helix</keyword>
<keyword id="KW-0813">Transport</keyword>
<reference key="1">
    <citation type="journal article" date="2003" name="Nat. Biotechnol.">
        <title>The genome sequence of the entomopathogenic bacterium Photorhabdus luminescens.</title>
        <authorList>
            <person name="Duchaud E."/>
            <person name="Rusniok C."/>
            <person name="Frangeul L."/>
            <person name="Buchrieser C."/>
            <person name="Givaudan A."/>
            <person name="Taourit S."/>
            <person name="Bocs S."/>
            <person name="Boursaux-Eude C."/>
            <person name="Chandler M."/>
            <person name="Charles J.-F."/>
            <person name="Dassa E."/>
            <person name="Derose R."/>
            <person name="Derzelle S."/>
            <person name="Freyssinet G."/>
            <person name="Gaudriault S."/>
            <person name="Medigue C."/>
            <person name="Lanois A."/>
            <person name="Powell K."/>
            <person name="Siguier P."/>
            <person name="Vincent R."/>
            <person name="Wingate V."/>
            <person name="Zouine M."/>
            <person name="Glaser P."/>
            <person name="Boemare N."/>
            <person name="Danchin A."/>
            <person name="Kunst F."/>
        </authorList>
    </citation>
    <scope>NUCLEOTIDE SEQUENCE [LARGE SCALE GENOMIC DNA]</scope>
    <source>
        <strain>DSM 15139 / CIP 105565 / TT01</strain>
    </source>
</reference>
<proteinExistence type="inferred from homology"/>
<dbReference type="EMBL" id="BX571866">
    <property type="protein sequence ID" value="CAE14417.1"/>
    <property type="molecule type" value="Genomic_DNA"/>
</dbReference>
<dbReference type="SMR" id="Q7N536"/>
<dbReference type="STRING" id="243265.plu2124"/>
<dbReference type="KEGG" id="plu:plu2124"/>
<dbReference type="eggNOG" id="COG2076">
    <property type="taxonomic scope" value="Bacteria"/>
</dbReference>
<dbReference type="HOGENOM" id="CLU_133067_0_4_6"/>
<dbReference type="Proteomes" id="UP000002514">
    <property type="component" value="Chromosome"/>
</dbReference>
<dbReference type="GO" id="GO:0005886">
    <property type="term" value="C:plasma membrane"/>
    <property type="evidence" value="ECO:0007669"/>
    <property type="project" value="UniProtKB-SubCell"/>
</dbReference>
<dbReference type="GO" id="GO:0015199">
    <property type="term" value="F:amino-acid betaine transmembrane transporter activity"/>
    <property type="evidence" value="ECO:0007669"/>
    <property type="project" value="TreeGrafter"/>
</dbReference>
<dbReference type="GO" id="GO:0015297">
    <property type="term" value="F:antiporter activity"/>
    <property type="evidence" value="ECO:0007669"/>
    <property type="project" value="TreeGrafter"/>
</dbReference>
<dbReference type="GO" id="GO:0015220">
    <property type="term" value="F:choline transmembrane transporter activity"/>
    <property type="evidence" value="ECO:0007669"/>
    <property type="project" value="TreeGrafter"/>
</dbReference>
<dbReference type="GO" id="GO:0015606">
    <property type="term" value="F:spermidine transmembrane transporter activity"/>
    <property type="evidence" value="ECO:0007669"/>
    <property type="project" value="UniProtKB-UniRule"/>
</dbReference>
<dbReference type="GO" id="GO:0031460">
    <property type="term" value="P:glycine betaine transport"/>
    <property type="evidence" value="ECO:0007669"/>
    <property type="project" value="TreeGrafter"/>
</dbReference>
<dbReference type="FunFam" id="1.10.3730.20:FF:000001">
    <property type="entry name" value="Quaternary ammonium compound resistance transporter SugE"/>
    <property type="match status" value="1"/>
</dbReference>
<dbReference type="Gene3D" id="1.10.3730.20">
    <property type="match status" value="1"/>
</dbReference>
<dbReference type="HAMAP" id="MF_01597">
    <property type="entry name" value="MdtI"/>
    <property type="match status" value="1"/>
</dbReference>
<dbReference type="InterPro" id="IPR000390">
    <property type="entry name" value="Small_drug/metabolite_transptr"/>
</dbReference>
<dbReference type="InterPro" id="IPR045324">
    <property type="entry name" value="Small_multidrug_res"/>
</dbReference>
<dbReference type="InterPro" id="IPR023737">
    <property type="entry name" value="Spermidine_export_MdtI"/>
</dbReference>
<dbReference type="NCBIfam" id="NF007934">
    <property type="entry name" value="PRK10650.1"/>
    <property type="match status" value="1"/>
</dbReference>
<dbReference type="PANTHER" id="PTHR30561">
    <property type="entry name" value="SMR FAMILY PROTON-DEPENDENT DRUG EFFLUX TRANSPORTER SUGE"/>
    <property type="match status" value="1"/>
</dbReference>
<dbReference type="PANTHER" id="PTHR30561:SF6">
    <property type="entry name" value="SPERMIDINE EXPORT PROTEIN MDTI"/>
    <property type="match status" value="1"/>
</dbReference>
<dbReference type="Pfam" id="PF00893">
    <property type="entry name" value="Multi_Drug_Res"/>
    <property type="match status" value="1"/>
</dbReference>
<dbReference type="SUPFAM" id="SSF103481">
    <property type="entry name" value="Multidrug resistance efflux transporter EmrE"/>
    <property type="match status" value="1"/>
</dbReference>